<keyword id="KW-0030">Aminoacyl-tRNA synthetase</keyword>
<keyword id="KW-0067">ATP-binding</keyword>
<keyword id="KW-0963">Cytoplasm</keyword>
<keyword id="KW-0436">Ligase</keyword>
<keyword id="KW-0460">Magnesium</keyword>
<keyword id="KW-0479">Metal-binding</keyword>
<keyword id="KW-0547">Nucleotide-binding</keyword>
<keyword id="KW-0648">Protein biosynthesis</keyword>
<keyword id="KW-1185">Reference proteome</keyword>
<keyword id="KW-0694">RNA-binding</keyword>
<keyword id="KW-0820">tRNA-binding</keyword>
<name>SYFB_BUCAI</name>
<feature type="chain" id="PRO_0000126856" description="Phenylalanine--tRNA ligase beta subunit">
    <location>
        <begin position="1"/>
        <end position="795"/>
    </location>
</feature>
<feature type="domain" description="tRNA-binding">
    <location>
        <begin position="39"/>
        <end position="148"/>
    </location>
</feature>
<feature type="domain" description="B5">
    <location>
        <begin position="400"/>
        <end position="475"/>
    </location>
</feature>
<feature type="domain" description="FDX-ACB">
    <location>
        <begin position="701"/>
        <end position="794"/>
    </location>
</feature>
<feature type="binding site" evidence="1">
    <location>
        <position position="453"/>
    </location>
    <ligand>
        <name>Mg(2+)</name>
        <dbReference type="ChEBI" id="CHEBI:18420"/>
        <note>shared with alpha subunit</note>
    </ligand>
</feature>
<feature type="binding site" evidence="1">
    <location>
        <position position="459"/>
    </location>
    <ligand>
        <name>Mg(2+)</name>
        <dbReference type="ChEBI" id="CHEBI:18420"/>
        <note>shared with alpha subunit</note>
    </ligand>
</feature>
<feature type="binding site" evidence="1">
    <location>
        <position position="463"/>
    </location>
    <ligand>
        <name>Mg(2+)</name>
        <dbReference type="ChEBI" id="CHEBI:18420"/>
        <note>shared with alpha subunit</note>
    </ligand>
</feature>
<reference key="1">
    <citation type="journal article" date="2000" name="Nature">
        <title>Genome sequence of the endocellular bacterial symbiont of aphids Buchnera sp. APS.</title>
        <authorList>
            <person name="Shigenobu S."/>
            <person name="Watanabe H."/>
            <person name="Hattori M."/>
            <person name="Sakaki Y."/>
            <person name="Ishikawa H."/>
        </authorList>
    </citation>
    <scope>NUCLEOTIDE SEQUENCE [LARGE SCALE GENOMIC DNA]</scope>
    <source>
        <strain>APS</strain>
    </source>
</reference>
<proteinExistence type="inferred from homology"/>
<comment type="catalytic activity">
    <reaction>
        <text>tRNA(Phe) + L-phenylalanine + ATP = L-phenylalanyl-tRNA(Phe) + AMP + diphosphate + H(+)</text>
        <dbReference type="Rhea" id="RHEA:19413"/>
        <dbReference type="Rhea" id="RHEA-COMP:9668"/>
        <dbReference type="Rhea" id="RHEA-COMP:9699"/>
        <dbReference type="ChEBI" id="CHEBI:15378"/>
        <dbReference type="ChEBI" id="CHEBI:30616"/>
        <dbReference type="ChEBI" id="CHEBI:33019"/>
        <dbReference type="ChEBI" id="CHEBI:58095"/>
        <dbReference type="ChEBI" id="CHEBI:78442"/>
        <dbReference type="ChEBI" id="CHEBI:78531"/>
        <dbReference type="ChEBI" id="CHEBI:456215"/>
        <dbReference type="EC" id="6.1.1.20"/>
    </reaction>
</comment>
<comment type="cofactor">
    <cofactor evidence="1">
        <name>Mg(2+)</name>
        <dbReference type="ChEBI" id="CHEBI:18420"/>
    </cofactor>
    <text evidence="1">Binds 2 magnesium ions per tetramer.</text>
</comment>
<comment type="subunit">
    <text evidence="1">Tetramer of two alpha and two beta subunits.</text>
</comment>
<comment type="subcellular location">
    <subcellularLocation>
        <location evidence="1">Cytoplasm</location>
    </subcellularLocation>
</comment>
<comment type="similarity">
    <text evidence="2">Belongs to the phenylalanyl-tRNA synthetase beta subunit family. Type 1 subfamily.</text>
</comment>
<comment type="caution">
    <text evidence="2">Lacks the conserved glutamate residue in position 462 that binds magnesium; it is replaced by a glycine residue.</text>
</comment>
<dbReference type="EC" id="6.1.1.20"/>
<dbReference type="EMBL" id="BA000003">
    <property type="protein sequence ID" value="BAB12848.1"/>
    <property type="molecule type" value="Genomic_DNA"/>
</dbReference>
<dbReference type="RefSeq" id="NP_239962.1">
    <property type="nucleotide sequence ID" value="NC_002528.1"/>
</dbReference>
<dbReference type="RefSeq" id="WP_010895964.1">
    <property type="nucleotide sequence ID" value="NC_002528.1"/>
</dbReference>
<dbReference type="SMR" id="P57230"/>
<dbReference type="STRING" id="563178.BUAP5A_128"/>
<dbReference type="EnsemblBacteria" id="BAB12848">
    <property type="protein sequence ID" value="BAB12848"/>
    <property type="gene ID" value="BAB12848"/>
</dbReference>
<dbReference type="KEGG" id="buc:BU130"/>
<dbReference type="PATRIC" id="fig|107806.10.peg.139"/>
<dbReference type="eggNOG" id="COG0072">
    <property type="taxonomic scope" value="Bacteria"/>
</dbReference>
<dbReference type="eggNOG" id="COG0073">
    <property type="taxonomic scope" value="Bacteria"/>
</dbReference>
<dbReference type="HOGENOM" id="CLU_016891_0_0_6"/>
<dbReference type="Proteomes" id="UP000001806">
    <property type="component" value="Chromosome"/>
</dbReference>
<dbReference type="GO" id="GO:0009328">
    <property type="term" value="C:phenylalanine-tRNA ligase complex"/>
    <property type="evidence" value="ECO:0007669"/>
    <property type="project" value="TreeGrafter"/>
</dbReference>
<dbReference type="GO" id="GO:0005524">
    <property type="term" value="F:ATP binding"/>
    <property type="evidence" value="ECO:0007669"/>
    <property type="project" value="UniProtKB-UniRule"/>
</dbReference>
<dbReference type="GO" id="GO:0000287">
    <property type="term" value="F:magnesium ion binding"/>
    <property type="evidence" value="ECO:0007669"/>
    <property type="project" value="UniProtKB-UniRule"/>
</dbReference>
<dbReference type="GO" id="GO:0004826">
    <property type="term" value="F:phenylalanine-tRNA ligase activity"/>
    <property type="evidence" value="ECO:0007669"/>
    <property type="project" value="UniProtKB-UniRule"/>
</dbReference>
<dbReference type="GO" id="GO:0000049">
    <property type="term" value="F:tRNA binding"/>
    <property type="evidence" value="ECO:0007669"/>
    <property type="project" value="UniProtKB-KW"/>
</dbReference>
<dbReference type="GO" id="GO:0006432">
    <property type="term" value="P:phenylalanyl-tRNA aminoacylation"/>
    <property type="evidence" value="ECO:0007669"/>
    <property type="project" value="UniProtKB-UniRule"/>
</dbReference>
<dbReference type="CDD" id="cd00769">
    <property type="entry name" value="PheRS_beta_core"/>
    <property type="match status" value="1"/>
</dbReference>
<dbReference type="CDD" id="cd02796">
    <property type="entry name" value="tRNA_bind_bactPheRS"/>
    <property type="match status" value="1"/>
</dbReference>
<dbReference type="FunFam" id="2.40.50.140:FF:000045">
    <property type="entry name" value="Phenylalanine--tRNA ligase beta subunit"/>
    <property type="match status" value="1"/>
</dbReference>
<dbReference type="FunFam" id="3.30.930.10:FF:000022">
    <property type="entry name" value="Phenylalanine--tRNA ligase beta subunit"/>
    <property type="match status" value="1"/>
</dbReference>
<dbReference type="Gene3D" id="3.30.56.10">
    <property type="match status" value="2"/>
</dbReference>
<dbReference type="Gene3D" id="3.30.930.10">
    <property type="entry name" value="Bira Bifunctional Protein, Domain 2"/>
    <property type="match status" value="1"/>
</dbReference>
<dbReference type="Gene3D" id="3.30.70.380">
    <property type="entry name" value="Ferrodoxin-fold anticodon-binding domain"/>
    <property type="match status" value="1"/>
</dbReference>
<dbReference type="Gene3D" id="2.40.50.140">
    <property type="entry name" value="Nucleic acid-binding proteins"/>
    <property type="match status" value="1"/>
</dbReference>
<dbReference type="Gene3D" id="3.50.40.10">
    <property type="entry name" value="Phenylalanyl-trna Synthetase, Chain B, domain 3"/>
    <property type="match status" value="1"/>
</dbReference>
<dbReference type="HAMAP" id="MF_00283">
    <property type="entry name" value="Phe_tRNA_synth_beta1"/>
    <property type="match status" value="1"/>
</dbReference>
<dbReference type="InterPro" id="IPR045864">
    <property type="entry name" value="aa-tRNA-synth_II/BPL/LPL"/>
</dbReference>
<dbReference type="InterPro" id="IPR005146">
    <property type="entry name" value="B3/B4_tRNA-bd"/>
</dbReference>
<dbReference type="InterPro" id="IPR009061">
    <property type="entry name" value="DNA-bd_dom_put_sf"/>
</dbReference>
<dbReference type="InterPro" id="IPR005121">
    <property type="entry name" value="Fdx_antiC-bd"/>
</dbReference>
<dbReference type="InterPro" id="IPR036690">
    <property type="entry name" value="Fdx_antiC-bd_sf"/>
</dbReference>
<dbReference type="InterPro" id="IPR012340">
    <property type="entry name" value="NA-bd_OB-fold"/>
</dbReference>
<dbReference type="InterPro" id="IPR045060">
    <property type="entry name" value="Phe-tRNA-ligase_IIc_bsu"/>
</dbReference>
<dbReference type="InterPro" id="IPR004532">
    <property type="entry name" value="Phe-tRNA-ligase_IIc_bsu_bact"/>
</dbReference>
<dbReference type="InterPro" id="IPR020825">
    <property type="entry name" value="Phe-tRNA_synthase-like_B3/B4"/>
</dbReference>
<dbReference type="InterPro" id="IPR041616">
    <property type="entry name" value="PheRS_beta_core"/>
</dbReference>
<dbReference type="InterPro" id="IPR002547">
    <property type="entry name" value="tRNA-bd_dom"/>
</dbReference>
<dbReference type="InterPro" id="IPR033714">
    <property type="entry name" value="tRNA_bind_bactPheRS"/>
</dbReference>
<dbReference type="InterPro" id="IPR005147">
    <property type="entry name" value="tRNA_synthase_B5-dom"/>
</dbReference>
<dbReference type="NCBIfam" id="TIGR00472">
    <property type="entry name" value="pheT_bact"/>
    <property type="match status" value="1"/>
</dbReference>
<dbReference type="NCBIfam" id="NF045760">
    <property type="entry name" value="YtpR"/>
    <property type="match status" value="1"/>
</dbReference>
<dbReference type="PANTHER" id="PTHR10947:SF0">
    <property type="entry name" value="PHENYLALANINE--TRNA LIGASE BETA SUBUNIT"/>
    <property type="match status" value="1"/>
</dbReference>
<dbReference type="PANTHER" id="PTHR10947">
    <property type="entry name" value="PHENYLALANYL-TRNA SYNTHETASE BETA CHAIN AND LEUCINE-RICH REPEAT-CONTAINING PROTEIN 47"/>
    <property type="match status" value="1"/>
</dbReference>
<dbReference type="Pfam" id="PF03483">
    <property type="entry name" value="B3_4"/>
    <property type="match status" value="1"/>
</dbReference>
<dbReference type="Pfam" id="PF03484">
    <property type="entry name" value="B5"/>
    <property type="match status" value="1"/>
</dbReference>
<dbReference type="Pfam" id="PF03147">
    <property type="entry name" value="FDX-ACB"/>
    <property type="match status" value="1"/>
</dbReference>
<dbReference type="Pfam" id="PF01588">
    <property type="entry name" value="tRNA_bind"/>
    <property type="match status" value="1"/>
</dbReference>
<dbReference type="Pfam" id="PF17759">
    <property type="entry name" value="tRNA_synthFbeta"/>
    <property type="match status" value="1"/>
</dbReference>
<dbReference type="SMART" id="SM00873">
    <property type="entry name" value="B3_4"/>
    <property type="match status" value="1"/>
</dbReference>
<dbReference type="SMART" id="SM00874">
    <property type="entry name" value="B5"/>
    <property type="match status" value="1"/>
</dbReference>
<dbReference type="SMART" id="SM00896">
    <property type="entry name" value="FDX-ACB"/>
    <property type="match status" value="1"/>
</dbReference>
<dbReference type="SUPFAM" id="SSF54991">
    <property type="entry name" value="Anticodon-binding domain of PheRS"/>
    <property type="match status" value="1"/>
</dbReference>
<dbReference type="SUPFAM" id="SSF55681">
    <property type="entry name" value="Class II aaRS and biotin synthetases"/>
    <property type="match status" value="1"/>
</dbReference>
<dbReference type="SUPFAM" id="SSF50249">
    <property type="entry name" value="Nucleic acid-binding proteins"/>
    <property type="match status" value="1"/>
</dbReference>
<dbReference type="SUPFAM" id="SSF56037">
    <property type="entry name" value="PheT/TilS domain"/>
    <property type="match status" value="1"/>
</dbReference>
<dbReference type="SUPFAM" id="SSF46955">
    <property type="entry name" value="Putative DNA-binding domain"/>
    <property type="match status" value="1"/>
</dbReference>
<dbReference type="PROSITE" id="PS51483">
    <property type="entry name" value="B5"/>
    <property type="match status" value="1"/>
</dbReference>
<dbReference type="PROSITE" id="PS51447">
    <property type="entry name" value="FDX_ACB"/>
    <property type="match status" value="1"/>
</dbReference>
<dbReference type="PROSITE" id="PS50886">
    <property type="entry name" value="TRBD"/>
    <property type="match status" value="1"/>
</dbReference>
<accession>P57230</accession>
<gene>
    <name type="primary">pheT</name>
    <name type="ordered locus">BU130</name>
</gene>
<evidence type="ECO:0000250" key="1"/>
<evidence type="ECO:0000305" key="2"/>
<sequence length="795" mass="91921">MKFSEKWLREWIDPQVSSKILHEQISNSGIEVEHVENFKSEFHGVVVGKIVQCTFHNESNNLKVLKVDIGKKKLLNIICGASNCRNGIKVAVATVGATLPKNITINKKILKGAWSEGMLCSFFELGLFLNDNKIIEFPKETLVGINVYDYFLLEDNIIKVSITSNRPDGLSILGLSRNIAAINDLRISPLKNRLVPAVIQKKINIDIQADKECMNFFGRIIENININVDTPFWMKKKLFFSNVLSENIITNIIHYVLIELGQPLNILDADNINDSIIVRMARHEEDLFLKNNIKISLNENILVFSDSNKILSLPGNINSNIVDVDKNTKNIFLSSYLINRKYISYIIKKMNMNTVLEYHYYGVDPFLQNYAIEYATDLILKICGGVPGPINEKKCNFQIHKNNTIRLHHERLNKIIGFFIDTSVISKILYRLDYQLKFQKTFWDVISPSWRFDILIEEDVIGDILRIYEYNNVHLIPLKEFLNCSKKNELTDSLLKKSAVILINQGYHEVINYGFIDPKIQNLIFPNEENLLLSNPISQDMSCMRLSLWPGLLKNISYNKNRQQKSIRIFESGLCFSIDKRENLGIRQEIFLAAAISGNYIKENWYYNIRKMDFYDLKGDLESILESICQLNEIEFRRKKIHGLHPEQSASIYFRNYLIGSIGAIDPRLEKALNVSSTTFLFEISLNNFSDIKPLKVEEISKFPTVRRDIAILISEEIAAYNVIEQCKIFFINEKVEINLFDIYAYKESHNHKKSLGISFIFQNKKRTFQDNEINLMIDDCIGVLQKKFQAVLRK</sequence>
<organism>
    <name type="scientific">Buchnera aphidicola subsp. Acyrthosiphon pisum (strain APS)</name>
    <name type="common">Acyrthosiphon pisum symbiotic bacterium</name>
    <dbReference type="NCBI Taxonomy" id="107806"/>
    <lineage>
        <taxon>Bacteria</taxon>
        <taxon>Pseudomonadati</taxon>
        <taxon>Pseudomonadota</taxon>
        <taxon>Gammaproteobacteria</taxon>
        <taxon>Enterobacterales</taxon>
        <taxon>Erwiniaceae</taxon>
        <taxon>Buchnera</taxon>
    </lineage>
</organism>
<protein>
    <recommendedName>
        <fullName>Phenylalanine--tRNA ligase beta subunit</fullName>
        <ecNumber>6.1.1.20</ecNumber>
    </recommendedName>
    <alternativeName>
        <fullName>Phenylalanyl-tRNA synthetase beta subunit</fullName>
        <shortName>PheRS</shortName>
    </alternativeName>
</protein>